<organism>
    <name type="scientific">Streptococcus equi subsp. equi (strain 4047)</name>
    <dbReference type="NCBI Taxonomy" id="553482"/>
    <lineage>
        <taxon>Bacteria</taxon>
        <taxon>Bacillati</taxon>
        <taxon>Bacillota</taxon>
        <taxon>Bacilli</taxon>
        <taxon>Lactobacillales</taxon>
        <taxon>Streptococcaceae</taxon>
        <taxon>Streptococcus</taxon>
    </lineage>
</organism>
<gene>
    <name evidence="1" type="primary">accD</name>
    <name type="ordered locus">SEQ_0487</name>
</gene>
<comment type="function">
    <text evidence="1">Component of the acetyl coenzyme A carboxylase (ACC) complex. Biotin carboxylase (BC) catalyzes the carboxylation of biotin on its carrier protein (BCCP) and then the CO(2) group is transferred by the transcarboxylase to acetyl-CoA to form malonyl-CoA.</text>
</comment>
<comment type="catalytic activity">
    <reaction evidence="1">
        <text>N(6)-carboxybiotinyl-L-lysyl-[protein] + acetyl-CoA = N(6)-biotinyl-L-lysyl-[protein] + malonyl-CoA</text>
        <dbReference type="Rhea" id="RHEA:54728"/>
        <dbReference type="Rhea" id="RHEA-COMP:10505"/>
        <dbReference type="Rhea" id="RHEA-COMP:10506"/>
        <dbReference type="ChEBI" id="CHEBI:57288"/>
        <dbReference type="ChEBI" id="CHEBI:57384"/>
        <dbReference type="ChEBI" id="CHEBI:83144"/>
        <dbReference type="ChEBI" id="CHEBI:83145"/>
        <dbReference type="EC" id="2.1.3.15"/>
    </reaction>
</comment>
<comment type="cofactor">
    <cofactor evidence="1">
        <name>Zn(2+)</name>
        <dbReference type="ChEBI" id="CHEBI:29105"/>
    </cofactor>
    <text evidence="1">Binds 1 zinc ion per subunit.</text>
</comment>
<comment type="pathway">
    <text evidence="1">Lipid metabolism; malonyl-CoA biosynthesis; malonyl-CoA from acetyl-CoA: step 1/1.</text>
</comment>
<comment type="subunit">
    <text evidence="1">Acetyl-CoA carboxylase is a heterohexamer composed of biotin carboxyl carrier protein (AccB), biotin carboxylase (AccC) and two subunits each of ACCase subunit alpha (AccA) and ACCase subunit beta (AccD).</text>
</comment>
<comment type="subcellular location">
    <subcellularLocation>
        <location evidence="1">Cytoplasm</location>
    </subcellularLocation>
</comment>
<comment type="similarity">
    <text evidence="1">Belongs to the AccD/PCCB family.</text>
</comment>
<protein>
    <recommendedName>
        <fullName evidence="1">Acetyl-coenzyme A carboxylase carboxyl transferase subunit beta</fullName>
        <shortName evidence="1">ACCase subunit beta</shortName>
        <shortName evidence="1">Acetyl-CoA carboxylase carboxyltransferase subunit beta</shortName>
        <ecNumber evidence="1">2.1.3.15</ecNumber>
    </recommendedName>
</protein>
<evidence type="ECO:0000255" key="1">
    <source>
        <dbReference type="HAMAP-Rule" id="MF_01395"/>
    </source>
</evidence>
<evidence type="ECO:0000255" key="2">
    <source>
        <dbReference type="PROSITE-ProRule" id="PRU01136"/>
    </source>
</evidence>
<sequence length="288" mass="31759">MALFSKKDKYIRITPNNSLKSSVSRNVPEVPDELFAKCPACKHMIYQKDLGPAKICPTCSYNFRISAQERLTLTVDEGSFQELFTDIETKDPLRFPDYQAKLQKARQATGLHEAVLTGTALVKGQRLALAIMDSHFIMASMGTVVGEKITRLFELAISERLPVVIFTASGGARMQEGIMSLMQMAKVSAAIKKHSNAGLFYLTILTDPTTGGVTASFAMEGDMIIAEPQSLVGFAGRRVIETTVRENLPDDFQKAEFLKEHGFVDAIVKRTDLRDRIAHLVAFHGGVS</sequence>
<name>ACCD_STRE4</name>
<keyword id="KW-0067">ATP-binding</keyword>
<keyword id="KW-0963">Cytoplasm</keyword>
<keyword id="KW-0275">Fatty acid biosynthesis</keyword>
<keyword id="KW-0276">Fatty acid metabolism</keyword>
<keyword id="KW-0444">Lipid biosynthesis</keyword>
<keyword id="KW-0443">Lipid metabolism</keyword>
<keyword id="KW-0479">Metal-binding</keyword>
<keyword id="KW-0547">Nucleotide-binding</keyword>
<keyword id="KW-0808">Transferase</keyword>
<keyword id="KW-0862">Zinc</keyword>
<keyword id="KW-0863">Zinc-finger</keyword>
<accession>C0M856</accession>
<reference key="1">
    <citation type="journal article" date="2009" name="PLoS Pathog.">
        <title>Genomic evidence for the evolution of Streptococcus equi: host restriction, increased virulence, and genetic exchange with human pathogens.</title>
        <authorList>
            <person name="Holden M.T.G."/>
            <person name="Heather Z."/>
            <person name="Paillot R."/>
            <person name="Steward K.F."/>
            <person name="Webb K."/>
            <person name="Ainslie F."/>
            <person name="Jourdan T."/>
            <person name="Bason N.C."/>
            <person name="Holroyd N.E."/>
            <person name="Mungall K."/>
            <person name="Quail M.A."/>
            <person name="Sanders M."/>
            <person name="Simmonds M."/>
            <person name="Willey D."/>
            <person name="Brooks K."/>
            <person name="Aanensen D.M."/>
            <person name="Spratt B.G."/>
            <person name="Jolley K.A."/>
            <person name="Maiden M.C.J."/>
            <person name="Kehoe M."/>
            <person name="Chanter N."/>
            <person name="Bentley S.D."/>
            <person name="Robinson C."/>
            <person name="Maskell D.J."/>
            <person name="Parkhill J."/>
            <person name="Waller A.S."/>
        </authorList>
    </citation>
    <scope>NUCLEOTIDE SEQUENCE [LARGE SCALE GENOMIC DNA]</scope>
    <source>
        <strain>4047</strain>
    </source>
</reference>
<dbReference type="EC" id="2.1.3.15" evidence="1"/>
<dbReference type="EMBL" id="FM204883">
    <property type="protein sequence ID" value="CAW92699.1"/>
    <property type="molecule type" value="Genomic_DNA"/>
</dbReference>
<dbReference type="RefSeq" id="WP_012679083.1">
    <property type="nucleotide sequence ID" value="NC_012471.1"/>
</dbReference>
<dbReference type="SMR" id="C0M856"/>
<dbReference type="KEGG" id="seu:SEQ_0487"/>
<dbReference type="HOGENOM" id="CLU_015486_1_1_9"/>
<dbReference type="OrthoDB" id="9772975at2"/>
<dbReference type="UniPathway" id="UPA00655">
    <property type="reaction ID" value="UER00711"/>
</dbReference>
<dbReference type="Proteomes" id="UP000001365">
    <property type="component" value="Chromosome"/>
</dbReference>
<dbReference type="GO" id="GO:0009317">
    <property type="term" value="C:acetyl-CoA carboxylase complex"/>
    <property type="evidence" value="ECO:0007669"/>
    <property type="project" value="InterPro"/>
</dbReference>
<dbReference type="GO" id="GO:0003989">
    <property type="term" value="F:acetyl-CoA carboxylase activity"/>
    <property type="evidence" value="ECO:0007669"/>
    <property type="project" value="InterPro"/>
</dbReference>
<dbReference type="GO" id="GO:0005524">
    <property type="term" value="F:ATP binding"/>
    <property type="evidence" value="ECO:0007669"/>
    <property type="project" value="UniProtKB-KW"/>
</dbReference>
<dbReference type="GO" id="GO:0016743">
    <property type="term" value="F:carboxyl- or carbamoyltransferase activity"/>
    <property type="evidence" value="ECO:0007669"/>
    <property type="project" value="UniProtKB-UniRule"/>
</dbReference>
<dbReference type="GO" id="GO:0008270">
    <property type="term" value="F:zinc ion binding"/>
    <property type="evidence" value="ECO:0007669"/>
    <property type="project" value="UniProtKB-UniRule"/>
</dbReference>
<dbReference type="GO" id="GO:0006633">
    <property type="term" value="P:fatty acid biosynthetic process"/>
    <property type="evidence" value="ECO:0007669"/>
    <property type="project" value="UniProtKB-KW"/>
</dbReference>
<dbReference type="GO" id="GO:2001295">
    <property type="term" value="P:malonyl-CoA biosynthetic process"/>
    <property type="evidence" value="ECO:0007669"/>
    <property type="project" value="UniProtKB-UniRule"/>
</dbReference>
<dbReference type="Gene3D" id="3.90.226.10">
    <property type="entry name" value="2-enoyl-CoA Hydratase, Chain A, domain 1"/>
    <property type="match status" value="1"/>
</dbReference>
<dbReference type="HAMAP" id="MF_01395">
    <property type="entry name" value="AcetylCoA_CT_beta"/>
    <property type="match status" value="1"/>
</dbReference>
<dbReference type="InterPro" id="IPR034733">
    <property type="entry name" value="AcCoA_carboxyl_beta"/>
</dbReference>
<dbReference type="InterPro" id="IPR000438">
    <property type="entry name" value="Acetyl_CoA_COase_Trfase_b_su"/>
</dbReference>
<dbReference type="InterPro" id="IPR029045">
    <property type="entry name" value="ClpP/crotonase-like_dom_sf"/>
</dbReference>
<dbReference type="InterPro" id="IPR011762">
    <property type="entry name" value="COA_CT_N"/>
</dbReference>
<dbReference type="NCBIfam" id="TIGR00515">
    <property type="entry name" value="accD"/>
    <property type="match status" value="1"/>
</dbReference>
<dbReference type="PANTHER" id="PTHR42995">
    <property type="entry name" value="ACETYL-COENZYME A CARBOXYLASE CARBOXYL TRANSFERASE SUBUNIT BETA, CHLOROPLASTIC"/>
    <property type="match status" value="1"/>
</dbReference>
<dbReference type="PANTHER" id="PTHR42995:SF5">
    <property type="entry name" value="ACETYL-COENZYME A CARBOXYLASE CARBOXYL TRANSFERASE SUBUNIT BETA, CHLOROPLASTIC"/>
    <property type="match status" value="1"/>
</dbReference>
<dbReference type="Pfam" id="PF01039">
    <property type="entry name" value="Carboxyl_trans"/>
    <property type="match status" value="1"/>
</dbReference>
<dbReference type="PRINTS" id="PR01070">
    <property type="entry name" value="ACCCTRFRASEB"/>
</dbReference>
<dbReference type="SUPFAM" id="SSF52096">
    <property type="entry name" value="ClpP/crotonase"/>
    <property type="match status" value="1"/>
</dbReference>
<dbReference type="PROSITE" id="PS50980">
    <property type="entry name" value="COA_CT_NTER"/>
    <property type="match status" value="1"/>
</dbReference>
<feature type="chain" id="PRO_0000389867" description="Acetyl-coenzyme A carboxylase carboxyl transferase subunit beta">
    <location>
        <begin position="1"/>
        <end position="288"/>
    </location>
</feature>
<feature type="domain" description="CoA carboxyltransferase N-terminal" evidence="2">
    <location>
        <begin position="34"/>
        <end position="288"/>
    </location>
</feature>
<feature type="zinc finger region" description="C4-type" evidence="1">
    <location>
        <begin position="38"/>
        <end position="59"/>
    </location>
</feature>
<feature type="binding site" evidence="1">
    <location>
        <position position="38"/>
    </location>
    <ligand>
        <name>Zn(2+)</name>
        <dbReference type="ChEBI" id="CHEBI:29105"/>
    </ligand>
</feature>
<feature type="binding site" evidence="1">
    <location>
        <position position="41"/>
    </location>
    <ligand>
        <name>Zn(2+)</name>
        <dbReference type="ChEBI" id="CHEBI:29105"/>
    </ligand>
</feature>
<feature type="binding site" evidence="1">
    <location>
        <position position="56"/>
    </location>
    <ligand>
        <name>Zn(2+)</name>
        <dbReference type="ChEBI" id="CHEBI:29105"/>
    </ligand>
</feature>
<feature type="binding site" evidence="1">
    <location>
        <position position="59"/>
    </location>
    <ligand>
        <name>Zn(2+)</name>
        <dbReference type="ChEBI" id="CHEBI:29105"/>
    </ligand>
</feature>
<proteinExistence type="inferred from homology"/>